<comment type="function">
    <text evidence="1">Catalyzes the methylthiolation of an aspartic acid residue of ribosomal protein uS12.</text>
</comment>
<comment type="catalytic activity">
    <reaction evidence="1">
        <text>L-aspartate(89)-[ribosomal protein uS12]-hydrogen + (sulfur carrier)-SH + AH2 + 2 S-adenosyl-L-methionine = 3-methylsulfanyl-L-aspartate(89)-[ribosomal protein uS12]-hydrogen + (sulfur carrier)-H + 5'-deoxyadenosine + L-methionine + A + S-adenosyl-L-homocysteine + 2 H(+)</text>
        <dbReference type="Rhea" id="RHEA:37087"/>
        <dbReference type="Rhea" id="RHEA-COMP:10460"/>
        <dbReference type="Rhea" id="RHEA-COMP:10461"/>
        <dbReference type="Rhea" id="RHEA-COMP:14737"/>
        <dbReference type="Rhea" id="RHEA-COMP:14739"/>
        <dbReference type="ChEBI" id="CHEBI:13193"/>
        <dbReference type="ChEBI" id="CHEBI:15378"/>
        <dbReference type="ChEBI" id="CHEBI:17319"/>
        <dbReference type="ChEBI" id="CHEBI:17499"/>
        <dbReference type="ChEBI" id="CHEBI:29917"/>
        <dbReference type="ChEBI" id="CHEBI:29961"/>
        <dbReference type="ChEBI" id="CHEBI:57844"/>
        <dbReference type="ChEBI" id="CHEBI:57856"/>
        <dbReference type="ChEBI" id="CHEBI:59789"/>
        <dbReference type="ChEBI" id="CHEBI:64428"/>
        <dbReference type="ChEBI" id="CHEBI:73599"/>
        <dbReference type="EC" id="2.8.4.4"/>
    </reaction>
</comment>
<comment type="cofactor">
    <cofactor evidence="1">
        <name>[4Fe-4S] cluster</name>
        <dbReference type="ChEBI" id="CHEBI:49883"/>
    </cofactor>
    <text evidence="1">Binds 2 [4Fe-4S] clusters. One cluster is coordinated with 3 cysteines and an exchangeable S-adenosyl-L-methionine.</text>
</comment>
<comment type="subcellular location">
    <subcellularLocation>
        <location evidence="1">Cytoplasm</location>
    </subcellularLocation>
</comment>
<comment type="similarity">
    <text evidence="1">Belongs to the methylthiotransferase family. RimO subfamily.</text>
</comment>
<accession>A5GBX9</accession>
<evidence type="ECO:0000255" key="1">
    <source>
        <dbReference type="HAMAP-Rule" id="MF_01865"/>
    </source>
</evidence>
<evidence type="ECO:0000255" key="2">
    <source>
        <dbReference type="PROSITE-ProRule" id="PRU01266"/>
    </source>
</evidence>
<name>RIMO_GEOUR</name>
<reference key="1">
    <citation type="submission" date="2007-05" db="EMBL/GenBank/DDBJ databases">
        <title>Complete sequence of Geobacter uraniireducens Rf4.</title>
        <authorList>
            <consortium name="US DOE Joint Genome Institute"/>
            <person name="Copeland A."/>
            <person name="Lucas S."/>
            <person name="Lapidus A."/>
            <person name="Barry K."/>
            <person name="Detter J.C."/>
            <person name="Glavina del Rio T."/>
            <person name="Hammon N."/>
            <person name="Israni S."/>
            <person name="Dalin E."/>
            <person name="Tice H."/>
            <person name="Pitluck S."/>
            <person name="Chertkov O."/>
            <person name="Brettin T."/>
            <person name="Bruce D."/>
            <person name="Han C."/>
            <person name="Schmutz J."/>
            <person name="Larimer F."/>
            <person name="Land M."/>
            <person name="Hauser L."/>
            <person name="Kyrpides N."/>
            <person name="Mikhailova N."/>
            <person name="Shelobolina E."/>
            <person name="Aklujkar M."/>
            <person name="Lovley D."/>
            <person name="Richardson P."/>
        </authorList>
    </citation>
    <scope>NUCLEOTIDE SEQUENCE [LARGE SCALE GENOMIC DNA]</scope>
    <source>
        <strain>ATCC BAA-1134 / JCM 13001 / Rf4</strain>
    </source>
</reference>
<organism>
    <name type="scientific">Geotalea uraniireducens (strain Rf4)</name>
    <name type="common">Geobacter uraniireducens</name>
    <dbReference type="NCBI Taxonomy" id="351605"/>
    <lineage>
        <taxon>Bacteria</taxon>
        <taxon>Pseudomonadati</taxon>
        <taxon>Thermodesulfobacteriota</taxon>
        <taxon>Desulfuromonadia</taxon>
        <taxon>Geobacterales</taxon>
        <taxon>Geobacteraceae</taxon>
        <taxon>Geotalea</taxon>
    </lineage>
</organism>
<gene>
    <name evidence="1" type="primary">rimO</name>
    <name type="ordered locus">Gura_0716</name>
</gene>
<proteinExistence type="inferred from homology"/>
<sequence length="448" mass="50494">MSTSIKEKVSLVSLGCPKNLVDAEVMLGYLAKEKYEVTTDEREADIIIVNTCSFIKEAKQESIDTILDLADRKHDARCRLLIVTGCLPQRYQEELVKELPEVDIFVGTGDYPRIAEIIAEKEGMSEQLRYTGDPNFLYDEDLPRLQSSPYYTAYLKIAEGCSNCCSYCVIPSLRGAFRSRPLDKLLKEARELVARGVKEINLIAQDITGYGKDLAGGASLEGLIKELAALDGLQWIRLLYAYPDGISDSLIQLIRDEDKVCKYLDIPLQHVSDPVLKRMNRRSSEAEIRSLIAKLRGEIPGIALRTSLIVGFPGETDEDFKKLLHFVEETRFDRLGVFCYSREEGTPSAEMPDQVSERVKRERYKKLMRTQARVSFKHNRSLVDTEELVLIEGYSEETELLLKGRSSKQAPDIDGQVYVTSGNAQIGDIVKLRITDSSDYDLIGEIVP</sequence>
<dbReference type="EC" id="2.8.4.4" evidence="1"/>
<dbReference type="EMBL" id="CP000698">
    <property type="protein sequence ID" value="ABQ24926.1"/>
    <property type="molecule type" value="Genomic_DNA"/>
</dbReference>
<dbReference type="SMR" id="A5GBX9"/>
<dbReference type="STRING" id="351605.Gura_0716"/>
<dbReference type="KEGG" id="gur:Gura_0716"/>
<dbReference type="HOGENOM" id="CLU_018697_0_1_7"/>
<dbReference type="OrthoDB" id="9805215at2"/>
<dbReference type="Proteomes" id="UP000006695">
    <property type="component" value="Chromosome"/>
</dbReference>
<dbReference type="GO" id="GO:0005829">
    <property type="term" value="C:cytosol"/>
    <property type="evidence" value="ECO:0007669"/>
    <property type="project" value="TreeGrafter"/>
</dbReference>
<dbReference type="GO" id="GO:0051539">
    <property type="term" value="F:4 iron, 4 sulfur cluster binding"/>
    <property type="evidence" value="ECO:0007669"/>
    <property type="project" value="UniProtKB-UniRule"/>
</dbReference>
<dbReference type="GO" id="GO:0035599">
    <property type="term" value="F:aspartic acid methylthiotransferase activity"/>
    <property type="evidence" value="ECO:0007669"/>
    <property type="project" value="TreeGrafter"/>
</dbReference>
<dbReference type="GO" id="GO:0046872">
    <property type="term" value="F:metal ion binding"/>
    <property type="evidence" value="ECO:0007669"/>
    <property type="project" value="UniProtKB-KW"/>
</dbReference>
<dbReference type="GO" id="GO:0103039">
    <property type="term" value="F:protein methylthiotransferase activity"/>
    <property type="evidence" value="ECO:0007669"/>
    <property type="project" value="UniProtKB-EC"/>
</dbReference>
<dbReference type="GO" id="GO:0006400">
    <property type="term" value="P:tRNA modification"/>
    <property type="evidence" value="ECO:0007669"/>
    <property type="project" value="InterPro"/>
</dbReference>
<dbReference type="CDD" id="cd01335">
    <property type="entry name" value="Radical_SAM"/>
    <property type="match status" value="1"/>
</dbReference>
<dbReference type="FunFam" id="3.40.50.12160:FF:000002">
    <property type="entry name" value="Ribosomal protein S12 methylthiotransferase RimO"/>
    <property type="match status" value="1"/>
</dbReference>
<dbReference type="FunFam" id="3.80.30.20:FF:000001">
    <property type="entry name" value="tRNA-2-methylthio-N(6)-dimethylallyladenosine synthase 2"/>
    <property type="match status" value="1"/>
</dbReference>
<dbReference type="Gene3D" id="3.40.50.12160">
    <property type="entry name" value="Methylthiotransferase, N-terminal domain"/>
    <property type="match status" value="1"/>
</dbReference>
<dbReference type="Gene3D" id="2.40.50.140">
    <property type="entry name" value="Nucleic acid-binding proteins"/>
    <property type="match status" value="1"/>
</dbReference>
<dbReference type="Gene3D" id="3.80.30.20">
    <property type="entry name" value="tm_1862 like domain"/>
    <property type="match status" value="1"/>
</dbReference>
<dbReference type="HAMAP" id="MF_01865">
    <property type="entry name" value="MTTase_RimO"/>
    <property type="match status" value="1"/>
</dbReference>
<dbReference type="InterPro" id="IPR006638">
    <property type="entry name" value="Elp3/MiaA/NifB-like_rSAM"/>
</dbReference>
<dbReference type="InterPro" id="IPR005839">
    <property type="entry name" value="Methylthiotransferase"/>
</dbReference>
<dbReference type="InterPro" id="IPR020612">
    <property type="entry name" value="Methylthiotransferase_CS"/>
</dbReference>
<dbReference type="InterPro" id="IPR013848">
    <property type="entry name" value="Methylthiotransferase_N"/>
</dbReference>
<dbReference type="InterPro" id="IPR038135">
    <property type="entry name" value="Methylthiotransferase_N_sf"/>
</dbReference>
<dbReference type="InterPro" id="IPR012340">
    <property type="entry name" value="NA-bd_OB-fold"/>
</dbReference>
<dbReference type="InterPro" id="IPR005840">
    <property type="entry name" value="Ribosomal_uS12_MeSTrfase_RimO"/>
</dbReference>
<dbReference type="InterPro" id="IPR007197">
    <property type="entry name" value="rSAM"/>
</dbReference>
<dbReference type="InterPro" id="IPR023404">
    <property type="entry name" value="rSAM_horseshoe"/>
</dbReference>
<dbReference type="InterPro" id="IPR002792">
    <property type="entry name" value="TRAM_dom"/>
</dbReference>
<dbReference type="NCBIfam" id="TIGR01125">
    <property type="entry name" value="30S ribosomal protein S12 methylthiotransferase RimO"/>
    <property type="match status" value="1"/>
</dbReference>
<dbReference type="NCBIfam" id="TIGR00089">
    <property type="entry name" value="MiaB/RimO family radical SAM methylthiotransferase"/>
    <property type="match status" value="1"/>
</dbReference>
<dbReference type="PANTHER" id="PTHR43837">
    <property type="entry name" value="RIBOSOMAL PROTEIN S12 METHYLTHIOTRANSFERASE RIMO"/>
    <property type="match status" value="1"/>
</dbReference>
<dbReference type="PANTHER" id="PTHR43837:SF1">
    <property type="entry name" value="RIBOSOMAL PROTEIN US12 METHYLTHIOTRANSFERASE RIMO"/>
    <property type="match status" value="1"/>
</dbReference>
<dbReference type="Pfam" id="PF04055">
    <property type="entry name" value="Radical_SAM"/>
    <property type="match status" value="1"/>
</dbReference>
<dbReference type="Pfam" id="PF18693">
    <property type="entry name" value="TRAM_2"/>
    <property type="match status" value="1"/>
</dbReference>
<dbReference type="Pfam" id="PF00919">
    <property type="entry name" value="UPF0004"/>
    <property type="match status" value="1"/>
</dbReference>
<dbReference type="SFLD" id="SFLDG01082">
    <property type="entry name" value="B12-binding_domain_containing"/>
    <property type="match status" value="1"/>
</dbReference>
<dbReference type="SFLD" id="SFLDG01061">
    <property type="entry name" value="methylthiotransferase"/>
    <property type="match status" value="1"/>
</dbReference>
<dbReference type="SFLD" id="SFLDF00274">
    <property type="entry name" value="ribosomal_protein_S12_methylth"/>
    <property type="match status" value="1"/>
</dbReference>
<dbReference type="SMART" id="SM00729">
    <property type="entry name" value="Elp3"/>
    <property type="match status" value="1"/>
</dbReference>
<dbReference type="SUPFAM" id="SSF102114">
    <property type="entry name" value="Radical SAM enzymes"/>
    <property type="match status" value="1"/>
</dbReference>
<dbReference type="PROSITE" id="PS51449">
    <property type="entry name" value="MTTASE_N"/>
    <property type="match status" value="1"/>
</dbReference>
<dbReference type="PROSITE" id="PS01278">
    <property type="entry name" value="MTTASE_RADICAL"/>
    <property type="match status" value="1"/>
</dbReference>
<dbReference type="PROSITE" id="PS51918">
    <property type="entry name" value="RADICAL_SAM"/>
    <property type="match status" value="1"/>
</dbReference>
<dbReference type="PROSITE" id="PS50926">
    <property type="entry name" value="TRAM"/>
    <property type="match status" value="1"/>
</dbReference>
<feature type="chain" id="PRO_0000374847" description="Ribosomal protein uS12 methylthiotransferase RimO">
    <location>
        <begin position="1"/>
        <end position="448"/>
    </location>
</feature>
<feature type="domain" description="MTTase N-terminal" evidence="1">
    <location>
        <begin position="7"/>
        <end position="123"/>
    </location>
</feature>
<feature type="domain" description="Radical SAM core" evidence="2">
    <location>
        <begin position="147"/>
        <end position="377"/>
    </location>
</feature>
<feature type="domain" description="TRAM" evidence="1">
    <location>
        <begin position="380"/>
        <end position="448"/>
    </location>
</feature>
<feature type="binding site" evidence="1">
    <location>
        <position position="16"/>
    </location>
    <ligand>
        <name>[4Fe-4S] cluster</name>
        <dbReference type="ChEBI" id="CHEBI:49883"/>
        <label>1</label>
    </ligand>
</feature>
<feature type="binding site" evidence="1">
    <location>
        <position position="52"/>
    </location>
    <ligand>
        <name>[4Fe-4S] cluster</name>
        <dbReference type="ChEBI" id="CHEBI:49883"/>
        <label>1</label>
    </ligand>
</feature>
<feature type="binding site" evidence="1">
    <location>
        <position position="86"/>
    </location>
    <ligand>
        <name>[4Fe-4S] cluster</name>
        <dbReference type="ChEBI" id="CHEBI:49883"/>
        <label>1</label>
    </ligand>
</feature>
<feature type="binding site" evidence="1">
    <location>
        <position position="161"/>
    </location>
    <ligand>
        <name>[4Fe-4S] cluster</name>
        <dbReference type="ChEBI" id="CHEBI:49883"/>
        <label>2</label>
        <note>4Fe-4S-S-AdoMet</note>
    </ligand>
</feature>
<feature type="binding site" evidence="1">
    <location>
        <position position="165"/>
    </location>
    <ligand>
        <name>[4Fe-4S] cluster</name>
        <dbReference type="ChEBI" id="CHEBI:49883"/>
        <label>2</label>
        <note>4Fe-4S-S-AdoMet</note>
    </ligand>
</feature>
<feature type="binding site" evidence="1">
    <location>
        <position position="168"/>
    </location>
    <ligand>
        <name>[4Fe-4S] cluster</name>
        <dbReference type="ChEBI" id="CHEBI:49883"/>
        <label>2</label>
        <note>4Fe-4S-S-AdoMet</note>
    </ligand>
</feature>
<keyword id="KW-0004">4Fe-4S</keyword>
<keyword id="KW-0963">Cytoplasm</keyword>
<keyword id="KW-0408">Iron</keyword>
<keyword id="KW-0411">Iron-sulfur</keyword>
<keyword id="KW-0479">Metal-binding</keyword>
<keyword id="KW-1185">Reference proteome</keyword>
<keyword id="KW-0949">S-adenosyl-L-methionine</keyword>
<keyword id="KW-0808">Transferase</keyword>
<protein>
    <recommendedName>
        <fullName evidence="1">Ribosomal protein uS12 methylthiotransferase RimO</fullName>
        <shortName evidence="1">uS12 MTTase</shortName>
        <shortName evidence="1">uS12 methylthiotransferase</shortName>
        <ecNumber evidence="1">2.8.4.4</ecNumber>
    </recommendedName>
    <alternativeName>
        <fullName evidence="1">Ribosomal protein uS12 (aspartate-C(3))-methylthiotransferase</fullName>
    </alternativeName>
    <alternativeName>
        <fullName evidence="1">Ribosome maturation factor RimO</fullName>
    </alternativeName>
</protein>